<dbReference type="EC" id="1.2.1.70" evidence="1"/>
<dbReference type="EMBL" id="BX251412">
    <property type="protein sequence ID" value="CAD67409.1"/>
    <property type="molecule type" value="Genomic_DNA"/>
</dbReference>
<dbReference type="RefSeq" id="WP_011096687.1">
    <property type="nucleotide sequence ID" value="NC_004551.1"/>
</dbReference>
<dbReference type="SMR" id="Q83H91"/>
<dbReference type="GeneID" id="67388531"/>
<dbReference type="KEGG" id="tws:TW750"/>
<dbReference type="HOGENOM" id="CLU_035113_4_1_11"/>
<dbReference type="UniPathway" id="UPA00251">
    <property type="reaction ID" value="UER00316"/>
</dbReference>
<dbReference type="GO" id="GO:0008883">
    <property type="term" value="F:glutamyl-tRNA reductase activity"/>
    <property type="evidence" value="ECO:0007669"/>
    <property type="project" value="UniProtKB-UniRule"/>
</dbReference>
<dbReference type="GO" id="GO:0050661">
    <property type="term" value="F:NADP binding"/>
    <property type="evidence" value="ECO:0007669"/>
    <property type="project" value="InterPro"/>
</dbReference>
<dbReference type="GO" id="GO:0019353">
    <property type="term" value="P:protoporphyrinogen IX biosynthetic process from glutamate"/>
    <property type="evidence" value="ECO:0007669"/>
    <property type="project" value="TreeGrafter"/>
</dbReference>
<dbReference type="Gene3D" id="3.30.460.30">
    <property type="entry name" value="Glutamyl-tRNA reductase, N-terminal domain"/>
    <property type="match status" value="1"/>
</dbReference>
<dbReference type="Gene3D" id="3.40.50.720">
    <property type="entry name" value="NAD(P)-binding Rossmann-like Domain"/>
    <property type="match status" value="1"/>
</dbReference>
<dbReference type="HAMAP" id="MF_00087">
    <property type="entry name" value="Glu_tRNA_reductase"/>
    <property type="match status" value="1"/>
</dbReference>
<dbReference type="InterPro" id="IPR000343">
    <property type="entry name" value="4pyrrol_synth_GluRdtase"/>
</dbReference>
<dbReference type="InterPro" id="IPR015896">
    <property type="entry name" value="4pyrrol_synth_GluRdtase_dimer"/>
</dbReference>
<dbReference type="InterPro" id="IPR015895">
    <property type="entry name" value="4pyrrol_synth_GluRdtase_N"/>
</dbReference>
<dbReference type="InterPro" id="IPR018214">
    <property type="entry name" value="GluRdtase_CS"/>
</dbReference>
<dbReference type="InterPro" id="IPR036453">
    <property type="entry name" value="GluRdtase_dimer_dom_sf"/>
</dbReference>
<dbReference type="InterPro" id="IPR036343">
    <property type="entry name" value="GluRdtase_N_sf"/>
</dbReference>
<dbReference type="InterPro" id="IPR036291">
    <property type="entry name" value="NAD(P)-bd_dom_sf"/>
</dbReference>
<dbReference type="InterPro" id="IPR006151">
    <property type="entry name" value="Shikm_DH/Glu-tRNA_Rdtase"/>
</dbReference>
<dbReference type="NCBIfam" id="NF000750">
    <property type="entry name" value="PRK00045.3-4"/>
    <property type="match status" value="1"/>
</dbReference>
<dbReference type="PANTHER" id="PTHR43013">
    <property type="entry name" value="GLUTAMYL-TRNA REDUCTASE"/>
    <property type="match status" value="1"/>
</dbReference>
<dbReference type="PANTHER" id="PTHR43013:SF1">
    <property type="entry name" value="GLUTAMYL-TRNA REDUCTASE"/>
    <property type="match status" value="1"/>
</dbReference>
<dbReference type="Pfam" id="PF00745">
    <property type="entry name" value="GlutR_dimer"/>
    <property type="match status" value="1"/>
</dbReference>
<dbReference type="Pfam" id="PF05201">
    <property type="entry name" value="GlutR_N"/>
    <property type="match status" value="1"/>
</dbReference>
<dbReference type="Pfam" id="PF01488">
    <property type="entry name" value="Shikimate_DH"/>
    <property type="match status" value="1"/>
</dbReference>
<dbReference type="PIRSF" id="PIRSF000445">
    <property type="entry name" value="4pyrrol_synth_GluRdtase"/>
    <property type="match status" value="1"/>
</dbReference>
<dbReference type="SUPFAM" id="SSF69742">
    <property type="entry name" value="Glutamyl tRNA-reductase catalytic, N-terminal domain"/>
    <property type="match status" value="1"/>
</dbReference>
<dbReference type="SUPFAM" id="SSF69075">
    <property type="entry name" value="Glutamyl tRNA-reductase dimerization domain"/>
    <property type="match status" value="1"/>
</dbReference>
<dbReference type="SUPFAM" id="SSF51735">
    <property type="entry name" value="NAD(P)-binding Rossmann-fold domains"/>
    <property type="match status" value="1"/>
</dbReference>
<dbReference type="PROSITE" id="PS00747">
    <property type="entry name" value="GLUTR"/>
    <property type="match status" value="1"/>
</dbReference>
<gene>
    <name evidence="1" type="primary">hemA</name>
    <name type="ordered locus">TW750</name>
</gene>
<protein>
    <recommendedName>
        <fullName evidence="1">Glutamyl-tRNA reductase</fullName>
        <shortName evidence="1">GluTR</shortName>
        <ecNumber evidence="1">1.2.1.70</ecNumber>
    </recommendedName>
</protein>
<reference key="1">
    <citation type="journal article" date="2003" name="Lancet">
        <title>Sequencing and analysis of the genome of the Whipple's disease bacterium Tropheryma whipplei.</title>
        <authorList>
            <person name="Bentley S.D."/>
            <person name="Maiwald M."/>
            <person name="Murphy L.D."/>
            <person name="Pallen M.J."/>
            <person name="Yeats C.A."/>
            <person name="Dover L.G."/>
            <person name="Norbertczak H.T."/>
            <person name="Besra G.S."/>
            <person name="Quail M.A."/>
            <person name="Harris D.E."/>
            <person name="von Herbay A."/>
            <person name="Goble A."/>
            <person name="Rutter S."/>
            <person name="Squares R."/>
            <person name="Squares S."/>
            <person name="Barrell B.G."/>
            <person name="Parkhill J."/>
            <person name="Relman D.A."/>
        </authorList>
    </citation>
    <scope>NUCLEOTIDE SEQUENCE [LARGE SCALE GENOMIC DNA]</scope>
    <source>
        <strain>TW08/27</strain>
    </source>
</reference>
<evidence type="ECO:0000255" key="1">
    <source>
        <dbReference type="HAMAP-Rule" id="MF_00087"/>
    </source>
</evidence>
<comment type="function">
    <text evidence="1">Catalyzes the NADPH-dependent reduction of glutamyl-tRNA(Glu) to glutamate 1-semialdehyde (GSA).</text>
</comment>
<comment type="catalytic activity">
    <reaction evidence="1">
        <text>(S)-4-amino-5-oxopentanoate + tRNA(Glu) + NADP(+) = L-glutamyl-tRNA(Glu) + NADPH + H(+)</text>
        <dbReference type="Rhea" id="RHEA:12344"/>
        <dbReference type="Rhea" id="RHEA-COMP:9663"/>
        <dbReference type="Rhea" id="RHEA-COMP:9680"/>
        <dbReference type="ChEBI" id="CHEBI:15378"/>
        <dbReference type="ChEBI" id="CHEBI:57501"/>
        <dbReference type="ChEBI" id="CHEBI:57783"/>
        <dbReference type="ChEBI" id="CHEBI:58349"/>
        <dbReference type="ChEBI" id="CHEBI:78442"/>
        <dbReference type="ChEBI" id="CHEBI:78520"/>
        <dbReference type="EC" id="1.2.1.70"/>
    </reaction>
</comment>
<comment type="pathway">
    <text evidence="1">Porphyrin-containing compound metabolism; protoporphyrin-IX biosynthesis; 5-aminolevulinate from L-glutamyl-tRNA(Glu): step 1/2.</text>
</comment>
<comment type="subunit">
    <text evidence="1">Homodimer.</text>
</comment>
<comment type="domain">
    <text evidence="1">Possesses an unusual extended V-shaped dimeric structure with each monomer consisting of three distinct domains arranged along a curved 'spinal' alpha-helix. The N-terminal catalytic domain specifically recognizes the glutamate moiety of the substrate. The second domain is the NADPH-binding domain, and the third C-terminal domain is responsible for dimerization.</text>
</comment>
<comment type="miscellaneous">
    <text evidence="1">During catalysis, the active site Cys acts as a nucleophile attacking the alpha-carbonyl group of tRNA-bound glutamate with the formation of a thioester intermediate between enzyme and glutamate, and the concomitant release of tRNA(Glu). The thioester intermediate is finally reduced by direct hydride transfer from NADPH, to form the product GSA.</text>
</comment>
<comment type="similarity">
    <text evidence="1">Belongs to the glutamyl-tRNA reductase family.</text>
</comment>
<organism>
    <name type="scientific">Tropheryma whipplei (strain TW08/27)</name>
    <name type="common">Whipple's bacillus</name>
    <dbReference type="NCBI Taxonomy" id="218496"/>
    <lineage>
        <taxon>Bacteria</taxon>
        <taxon>Bacillati</taxon>
        <taxon>Actinomycetota</taxon>
        <taxon>Actinomycetes</taxon>
        <taxon>Micrococcales</taxon>
        <taxon>Tropherymataceae</taxon>
        <taxon>Tropheryma</taxon>
    </lineage>
</organism>
<keyword id="KW-0521">NADP</keyword>
<keyword id="KW-0560">Oxidoreductase</keyword>
<keyword id="KW-0627">Porphyrin biosynthesis</keyword>
<accession>Q83H91</accession>
<sequence length="447" mass="48838">MLLCVSANHKKTSFTVLEQLARVSPDFASELVEAEDIDGAAILSTCNRFEVYIDAIQKGDQDDVCKTGLLVQNRIGELCNISPSTIIEQTSFLAGCEVSRHLFSVATGLESMIIGETEIAGQVKRALTYAQKCRTTSPELERLFQRASAVNRHIRQSTKINEVGQSLVSLSLDLASSRIGDWSGVRAIIVGTGKYASKALALLKERGVVDISVYSPSGHVNNICNTEGVRNIFNLQTALSGCDLVVGCSSVDKPVITKQDIETAQASGSRTSRVRPVGRPSTDLTAIEASNRSRHVLIDLGLPRNFDPAISDLPTADLIDLDMLRVHAPFDNLAAEKMAHELAIESSSQFVNDCKQHEATPVIVSFRNYLESLTQTSLRRTDNCKHAQHALKHFVNSLIHIPLTRCKQLAANGESHKFAESMEILFDVKTDCTEGTQYQSSCGKSFD</sequence>
<feature type="chain" id="PRO_0000114081" description="Glutamyl-tRNA reductase">
    <location>
        <begin position="1"/>
        <end position="447"/>
    </location>
</feature>
<feature type="active site" description="Nucleophile" evidence="1">
    <location>
        <position position="46"/>
    </location>
</feature>
<feature type="binding site" evidence="1">
    <location>
        <begin position="45"/>
        <end position="48"/>
    </location>
    <ligand>
        <name>substrate</name>
    </ligand>
</feature>
<feature type="binding site" evidence="1">
    <location>
        <position position="111"/>
    </location>
    <ligand>
        <name>substrate</name>
    </ligand>
</feature>
<feature type="binding site" evidence="1">
    <location>
        <begin position="116"/>
        <end position="118"/>
    </location>
    <ligand>
        <name>substrate</name>
    </ligand>
</feature>
<feature type="binding site" evidence="1">
    <location>
        <position position="122"/>
    </location>
    <ligand>
        <name>substrate</name>
    </ligand>
</feature>
<feature type="binding site" evidence="1">
    <location>
        <begin position="191"/>
        <end position="196"/>
    </location>
    <ligand>
        <name>NADP(+)</name>
        <dbReference type="ChEBI" id="CHEBI:58349"/>
    </ligand>
</feature>
<feature type="site" description="Important for activity" evidence="1">
    <location>
        <position position="101"/>
    </location>
</feature>
<proteinExistence type="inferred from homology"/>
<name>HEM1_TROW8</name>